<comment type="function">
    <text evidence="1">The GINS complex plays an essential role in the initiation of DNA replication.</text>
</comment>
<comment type="subunit">
    <text evidence="1">Component of the GINS complex which is a heterotetramer of SLD5, PSF1, PSF2 and PSF3.</text>
</comment>
<comment type="subcellular location">
    <subcellularLocation>
        <location evidence="1">Nucleus</location>
    </subcellularLocation>
</comment>
<comment type="similarity">
    <text evidence="2">Belongs to the GINS3/PSF3 family.</text>
</comment>
<evidence type="ECO:0000250" key="1"/>
<evidence type="ECO:0000305" key="2"/>
<accession>Q74Z08</accession>
<gene>
    <name type="primary">PSF3</name>
    <name type="ordered locus">AGR399C</name>
</gene>
<sequence length="185" mass="20342">MGYYDLDDILADSSKFACRFNYELPGLGYLEGNPGKPVGKHSKVELPLWLASVLATVTGEQEHVDEEALPFVEFLPPEMFSARVVNAIKADAPTLDVHSINGHFYALGTRWAALFSDAGLAGMLAGMVLERALEVQRHAASAAVEATAPTDATARMLQTLDEWERQLYRRAHAASRDAKLWAARR</sequence>
<dbReference type="EMBL" id="AE016820">
    <property type="protein sequence ID" value="AAS54889.1"/>
    <property type="molecule type" value="Genomic_DNA"/>
</dbReference>
<dbReference type="RefSeq" id="NP_987065.1">
    <property type="nucleotide sequence ID" value="NM_212127.2"/>
</dbReference>
<dbReference type="SMR" id="Q74Z08"/>
<dbReference type="FunCoup" id="Q74Z08">
    <property type="interactions" value="422"/>
</dbReference>
<dbReference type="STRING" id="284811.Q74Z08"/>
<dbReference type="EnsemblFungi" id="AAS54889">
    <property type="protein sequence ID" value="AAS54889"/>
    <property type="gene ID" value="AGOS_AGR399C"/>
</dbReference>
<dbReference type="GeneID" id="4623369"/>
<dbReference type="KEGG" id="ago:AGOS_AGR399C"/>
<dbReference type="eggNOG" id="KOG1106">
    <property type="taxonomic scope" value="Eukaryota"/>
</dbReference>
<dbReference type="HOGENOM" id="CLU_081646_0_1_1"/>
<dbReference type="InParanoid" id="Q74Z08"/>
<dbReference type="OMA" id="IYKEGWR"/>
<dbReference type="OrthoDB" id="10251744at2759"/>
<dbReference type="Proteomes" id="UP000000591">
    <property type="component" value="Chromosome VII"/>
</dbReference>
<dbReference type="GO" id="GO:0071162">
    <property type="term" value="C:CMG complex"/>
    <property type="evidence" value="ECO:0007669"/>
    <property type="project" value="EnsemblFungi"/>
</dbReference>
<dbReference type="GO" id="GO:0000811">
    <property type="term" value="C:GINS complex"/>
    <property type="evidence" value="ECO:0000318"/>
    <property type="project" value="GO_Central"/>
</dbReference>
<dbReference type="GO" id="GO:0043596">
    <property type="term" value="C:nuclear replication fork"/>
    <property type="evidence" value="ECO:0007669"/>
    <property type="project" value="EnsemblFungi"/>
</dbReference>
<dbReference type="GO" id="GO:0000727">
    <property type="term" value="P:double-strand break repair via break-induced replication"/>
    <property type="evidence" value="ECO:0007669"/>
    <property type="project" value="EnsemblFungi"/>
</dbReference>
<dbReference type="GO" id="GO:1902975">
    <property type="term" value="P:mitotic DNA replication initiation"/>
    <property type="evidence" value="ECO:0000318"/>
    <property type="project" value="GO_Central"/>
</dbReference>
<dbReference type="CDD" id="cd11713">
    <property type="entry name" value="GINS_A_psf3"/>
    <property type="match status" value="1"/>
</dbReference>
<dbReference type="CDD" id="cd21693">
    <property type="entry name" value="GINS_B_Psf3"/>
    <property type="match status" value="1"/>
</dbReference>
<dbReference type="Gene3D" id="1.20.58.2050">
    <property type="match status" value="1"/>
</dbReference>
<dbReference type="InterPro" id="IPR021151">
    <property type="entry name" value="GINS_A"/>
</dbReference>
<dbReference type="InterPro" id="IPR036224">
    <property type="entry name" value="GINS_bundle-like_dom_sf"/>
</dbReference>
<dbReference type="InterPro" id="IPR010492">
    <property type="entry name" value="GINS_Psf3"/>
</dbReference>
<dbReference type="InterPro" id="IPR038437">
    <property type="entry name" value="GINS_Psf3_sf"/>
</dbReference>
<dbReference type="InterPro" id="IPR055221">
    <property type="entry name" value="PSF3_N"/>
</dbReference>
<dbReference type="PANTHER" id="PTHR22768">
    <property type="entry name" value="DNA REPLICATION COMPLEX GINS PROTEIN PSF3"/>
    <property type="match status" value="1"/>
</dbReference>
<dbReference type="PANTHER" id="PTHR22768:SF0">
    <property type="entry name" value="DNA REPLICATION COMPLEX GINS PROTEIN PSF3"/>
    <property type="match status" value="1"/>
</dbReference>
<dbReference type="Pfam" id="PF22466">
    <property type="entry name" value="PSF3_N"/>
    <property type="match status" value="1"/>
</dbReference>
<dbReference type="Pfam" id="PF05916">
    <property type="entry name" value="Sld5"/>
    <property type="match status" value="1"/>
</dbReference>
<dbReference type="SUPFAM" id="SSF158573">
    <property type="entry name" value="GINS helical bundle-like"/>
    <property type="match status" value="1"/>
</dbReference>
<dbReference type="SUPFAM" id="SSF160059">
    <property type="entry name" value="PriA/YqbF domain"/>
    <property type="match status" value="1"/>
</dbReference>
<keyword id="KW-0235">DNA replication</keyword>
<keyword id="KW-0539">Nucleus</keyword>
<keyword id="KW-1185">Reference proteome</keyword>
<proteinExistence type="inferred from homology"/>
<reference key="1">
    <citation type="journal article" date="2004" name="Science">
        <title>The Ashbya gossypii genome as a tool for mapping the ancient Saccharomyces cerevisiae genome.</title>
        <authorList>
            <person name="Dietrich F.S."/>
            <person name="Voegeli S."/>
            <person name="Brachat S."/>
            <person name="Lerch A."/>
            <person name="Gates K."/>
            <person name="Steiner S."/>
            <person name="Mohr C."/>
            <person name="Poehlmann R."/>
            <person name="Luedi P."/>
            <person name="Choi S."/>
            <person name="Wing R.A."/>
            <person name="Flavier A."/>
            <person name="Gaffney T.D."/>
            <person name="Philippsen P."/>
        </authorList>
    </citation>
    <scope>NUCLEOTIDE SEQUENCE [LARGE SCALE GENOMIC DNA]</scope>
    <source>
        <strain>ATCC 10895 / CBS 109.51 / FGSC 9923 / NRRL Y-1056</strain>
    </source>
</reference>
<reference key="2">
    <citation type="journal article" date="2013" name="G3 (Bethesda)">
        <title>Genomes of Ashbya fungi isolated from insects reveal four mating-type loci, numerous translocations, lack of transposons, and distinct gene duplications.</title>
        <authorList>
            <person name="Dietrich F.S."/>
            <person name="Voegeli S."/>
            <person name="Kuo S."/>
            <person name="Philippsen P."/>
        </authorList>
    </citation>
    <scope>GENOME REANNOTATION</scope>
    <source>
        <strain>ATCC 10895 / CBS 109.51 / FGSC 9923 / NRRL Y-1056</strain>
    </source>
</reference>
<organism>
    <name type="scientific">Eremothecium gossypii (strain ATCC 10895 / CBS 109.51 / FGSC 9923 / NRRL Y-1056)</name>
    <name type="common">Yeast</name>
    <name type="synonym">Ashbya gossypii</name>
    <dbReference type="NCBI Taxonomy" id="284811"/>
    <lineage>
        <taxon>Eukaryota</taxon>
        <taxon>Fungi</taxon>
        <taxon>Dikarya</taxon>
        <taxon>Ascomycota</taxon>
        <taxon>Saccharomycotina</taxon>
        <taxon>Saccharomycetes</taxon>
        <taxon>Saccharomycetales</taxon>
        <taxon>Saccharomycetaceae</taxon>
        <taxon>Eremothecium</taxon>
    </lineage>
</organism>
<feature type="chain" id="PRO_0000278413" description="DNA replication complex GINS protein PSF3">
    <location>
        <begin position="1"/>
        <end position="185"/>
    </location>
</feature>
<name>PSF3_EREGS</name>
<protein>
    <recommendedName>
        <fullName>DNA replication complex GINS protein PSF3</fullName>
    </recommendedName>
</protein>